<reference key="1">
    <citation type="journal article" date="2010" name="Genome Biol. Evol.">
        <title>Continuing evolution of Burkholderia mallei through genome reduction and large-scale rearrangements.</title>
        <authorList>
            <person name="Losada L."/>
            <person name="Ronning C.M."/>
            <person name="DeShazer D."/>
            <person name="Woods D."/>
            <person name="Fedorova N."/>
            <person name="Kim H.S."/>
            <person name="Shabalina S.A."/>
            <person name="Pearson T.R."/>
            <person name="Brinkac L."/>
            <person name="Tan P."/>
            <person name="Nandi T."/>
            <person name="Crabtree J."/>
            <person name="Badger J."/>
            <person name="Beckstrom-Sternberg S."/>
            <person name="Saqib M."/>
            <person name="Schutzer S.E."/>
            <person name="Keim P."/>
            <person name="Nierman W.C."/>
        </authorList>
    </citation>
    <scope>NUCLEOTIDE SEQUENCE [LARGE SCALE GENOMIC DNA]</scope>
    <source>
        <strain>SAVP1</strain>
    </source>
</reference>
<comment type="function">
    <text evidence="1">Located at the top of the head of the 30S subunit, it contacts several helices of the 16S rRNA. In the 70S ribosome it contacts the 23S rRNA (bridge B1a) and protein L5 of the 50S subunit (bridge B1b), connecting the 2 subunits; these bridges are implicated in subunit movement. Contacts the tRNAs in the A and P-sites.</text>
</comment>
<comment type="subunit">
    <text evidence="1">Part of the 30S ribosomal subunit. Forms a loose heterodimer with protein S19. Forms two bridges to the 50S subunit in the 70S ribosome.</text>
</comment>
<comment type="similarity">
    <text evidence="1">Belongs to the universal ribosomal protein uS13 family.</text>
</comment>
<evidence type="ECO:0000255" key="1">
    <source>
        <dbReference type="HAMAP-Rule" id="MF_01315"/>
    </source>
</evidence>
<evidence type="ECO:0000256" key="2">
    <source>
        <dbReference type="SAM" id="MobiDB-lite"/>
    </source>
</evidence>
<evidence type="ECO:0000305" key="3"/>
<proteinExistence type="inferred from homology"/>
<gene>
    <name evidence="1" type="primary">rpsM</name>
    <name type="ordered locus">BMASAVP1_A3146</name>
</gene>
<sequence>MARIAGVNIPNHQHTEIGLTAIFGIGRTRARSICVASGVAFSKKVKDLTDADLEKLREEVGKFVVEGDLRREVTMNIKRLMDLGCYRGVRHRKGLPLRGQRTRTNARTRKGPRRAAQALKK</sequence>
<feature type="chain" id="PRO_1000051869" description="Small ribosomal subunit protein uS13">
    <location>
        <begin position="1"/>
        <end position="121"/>
    </location>
</feature>
<feature type="region of interest" description="Disordered" evidence="2">
    <location>
        <begin position="94"/>
        <end position="121"/>
    </location>
</feature>
<organism>
    <name type="scientific">Burkholderia mallei (strain SAVP1)</name>
    <dbReference type="NCBI Taxonomy" id="320388"/>
    <lineage>
        <taxon>Bacteria</taxon>
        <taxon>Pseudomonadati</taxon>
        <taxon>Pseudomonadota</taxon>
        <taxon>Betaproteobacteria</taxon>
        <taxon>Burkholderiales</taxon>
        <taxon>Burkholderiaceae</taxon>
        <taxon>Burkholderia</taxon>
        <taxon>pseudomallei group</taxon>
    </lineage>
</organism>
<accession>A1V880</accession>
<keyword id="KW-0687">Ribonucleoprotein</keyword>
<keyword id="KW-0689">Ribosomal protein</keyword>
<keyword id="KW-0694">RNA-binding</keyword>
<keyword id="KW-0699">rRNA-binding</keyword>
<keyword id="KW-0820">tRNA-binding</keyword>
<name>RS13_BURMS</name>
<dbReference type="EMBL" id="CP000526">
    <property type="protein sequence ID" value="ABM50392.1"/>
    <property type="molecule type" value="Genomic_DNA"/>
</dbReference>
<dbReference type="RefSeq" id="WP_004197938.1">
    <property type="nucleotide sequence ID" value="NC_008785.1"/>
</dbReference>
<dbReference type="SMR" id="A1V880"/>
<dbReference type="GeneID" id="93061809"/>
<dbReference type="KEGG" id="bmv:BMASAVP1_A3146"/>
<dbReference type="HOGENOM" id="CLU_103849_1_2_4"/>
<dbReference type="GO" id="GO:0005829">
    <property type="term" value="C:cytosol"/>
    <property type="evidence" value="ECO:0007669"/>
    <property type="project" value="TreeGrafter"/>
</dbReference>
<dbReference type="GO" id="GO:0015935">
    <property type="term" value="C:small ribosomal subunit"/>
    <property type="evidence" value="ECO:0007669"/>
    <property type="project" value="TreeGrafter"/>
</dbReference>
<dbReference type="GO" id="GO:0019843">
    <property type="term" value="F:rRNA binding"/>
    <property type="evidence" value="ECO:0007669"/>
    <property type="project" value="UniProtKB-UniRule"/>
</dbReference>
<dbReference type="GO" id="GO:0003735">
    <property type="term" value="F:structural constituent of ribosome"/>
    <property type="evidence" value="ECO:0007669"/>
    <property type="project" value="InterPro"/>
</dbReference>
<dbReference type="GO" id="GO:0000049">
    <property type="term" value="F:tRNA binding"/>
    <property type="evidence" value="ECO:0007669"/>
    <property type="project" value="UniProtKB-UniRule"/>
</dbReference>
<dbReference type="GO" id="GO:0006412">
    <property type="term" value="P:translation"/>
    <property type="evidence" value="ECO:0007669"/>
    <property type="project" value="UniProtKB-UniRule"/>
</dbReference>
<dbReference type="FunFam" id="1.10.8.50:FF:000001">
    <property type="entry name" value="30S ribosomal protein S13"/>
    <property type="match status" value="1"/>
</dbReference>
<dbReference type="FunFam" id="4.10.910.10:FF:000001">
    <property type="entry name" value="30S ribosomal protein S13"/>
    <property type="match status" value="1"/>
</dbReference>
<dbReference type="Gene3D" id="1.10.8.50">
    <property type="match status" value="1"/>
</dbReference>
<dbReference type="Gene3D" id="4.10.910.10">
    <property type="entry name" value="30s ribosomal protein s13, domain 2"/>
    <property type="match status" value="1"/>
</dbReference>
<dbReference type="HAMAP" id="MF_01315">
    <property type="entry name" value="Ribosomal_uS13"/>
    <property type="match status" value="1"/>
</dbReference>
<dbReference type="InterPro" id="IPR027437">
    <property type="entry name" value="Rbsml_uS13_C"/>
</dbReference>
<dbReference type="InterPro" id="IPR001892">
    <property type="entry name" value="Ribosomal_uS13"/>
</dbReference>
<dbReference type="InterPro" id="IPR010979">
    <property type="entry name" value="Ribosomal_uS13-like_H2TH"/>
</dbReference>
<dbReference type="InterPro" id="IPR019980">
    <property type="entry name" value="Ribosomal_uS13_bac-type"/>
</dbReference>
<dbReference type="InterPro" id="IPR018269">
    <property type="entry name" value="Ribosomal_uS13_CS"/>
</dbReference>
<dbReference type="NCBIfam" id="TIGR03631">
    <property type="entry name" value="uS13_bact"/>
    <property type="match status" value="1"/>
</dbReference>
<dbReference type="PANTHER" id="PTHR10871">
    <property type="entry name" value="30S RIBOSOMAL PROTEIN S13/40S RIBOSOMAL PROTEIN S18"/>
    <property type="match status" value="1"/>
</dbReference>
<dbReference type="PANTHER" id="PTHR10871:SF1">
    <property type="entry name" value="SMALL RIBOSOMAL SUBUNIT PROTEIN US13M"/>
    <property type="match status" value="1"/>
</dbReference>
<dbReference type="Pfam" id="PF00416">
    <property type="entry name" value="Ribosomal_S13"/>
    <property type="match status" value="1"/>
</dbReference>
<dbReference type="PIRSF" id="PIRSF002134">
    <property type="entry name" value="Ribosomal_S13"/>
    <property type="match status" value="1"/>
</dbReference>
<dbReference type="SUPFAM" id="SSF46946">
    <property type="entry name" value="S13-like H2TH domain"/>
    <property type="match status" value="1"/>
</dbReference>
<dbReference type="PROSITE" id="PS00646">
    <property type="entry name" value="RIBOSOMAL_S13_1"/>
    <property type="match status" value="1"/>
</dbReference>
<dbReference type="PROSITE" id="PS50159">
    <property type="entry name" value="RIBOSOMAL_S13_2"/>
    <property type="match status" value="1"/>
</dbReference>
<protein>
    <recommendedName>
        <fullName evidence="1">Small ribosomal subunit protein uS13</fullName>
    </recommendedName>
    <alternativeName>
        <fullName evidence="3">30S ribosomal protein S13</fullName>
    </alternativeName>
</protein>